<protein>
    <recommendedName>
        <fullName>DNA repair protein RAD51 homolog 1</fullName>
    </recommendedName>
</protein>
<feature type="initiator methionine" description="Removed" evidence="1">
    <location>
        <position position="1"/>
    </location>
</feature>
<feature type="chain" id="PRO_0000122931" description="DNA repair protein RAD51 homolog 1">
    <location>
        <begin position="2"/>
        <end position="339"/>
    </location>
</feature>
<feature type="domain" description="HhH">
    <location>
        <begin position="48"/>
        <end position="77"/>
    </location>
</feature>
<feature type="region of interest" description="Interaction with PALB2" evidence="1">
    <location>
        <begin position="184"/>
        <end position="257"/>
    </location>
</feature>
<feature type="short sequence motif" description="Nuclear export signal; masked by the interaction with BRCA2" evidence="1">
    <location>
        <begin position="245"/>
        <end position="260"/>
    </location>
</feature>
<feature type="binding site" evidence="3">
    <location>
        <begin position="127"/>
        <end position="134"/>
    </location>
    <ligand>
        <name>ATP</name>
        <dbReference type="ChEBI" id="CHEBI:30616"/>
    </ligand>
</feature>
<feature type="modified residue" description="N-acetylalanine" evidence="1">
    <location>
        <position position="2"/>
    </location>
</feature>
<feature type="modified residue" description="Phosphothreonine" evidence="1">
    <location>
        <position position="13"/>
    </location>
</feature>
<feature type="modified residue" description="Phosphoserine" evidence="1">
    <location>
        <position position="14"/>
    </location>
</feature>
<feature type="modified residue" description="Phosphotyrosine; by ABL1" evidence="1">
    <location>
        <position position="54"/>
    </location>
</feature>
<feature type="modified residue" description="Phosphothreonine; by CHEK1" evidence="1">
    <location>
        <position position="309"/>
    </location>
</feature>
<feature type="cross-link" description="Glycyl lysine isopeptide (Lys-Gly) (interchain with G-Cter in ubiquitin)" evidence="1">
    <location>
        <position position="58"/>
    </location>
</feature>
<feature type="cross-link" description="Glycyl lysine isopeptide (Lys-Gly) (interchain with G-Cter in ubiquitin)" evidence="1">
    <location>
        <position position="64"/>
    </location>
</feature>
<organism>
    <name type="scientific">Cricetulus griseus</name>
    <name type="common">Chinese hamster</name>
    <name type="synonym">Cricetulus barabensis griseus</name>
    <dbReference type="NCBI Taxonomy" id="10029"/>
    <lineage>
        <taxon>Eukaryota</taxon>
        <taxon>Metazoa</taxon>
        <taxon>Chordata</taxon>
        <taxon>Craniata</taxon>
        <taxon>Vertebrata</taxon>
        <taxon>Euteleostomi</taxon>
        <taxon>Mammalia</taxon>
        <taxon>Eutheria</taxon>
        <taxon>Euarchontoglires</taxon>
        <taxon>Glires</taxon>
        <taxon>Rodentia</taxon>
        <taxon>Myomorpha</taxon>
        <taxon>Muroidea</taxon>
        <taxon>Cricetidae</taxon>
        <taxon>Cricetinae</taxon>
        <taxon>Cricetulus</taxon>
    </lineage>
</organism>
<accession>P70099</accession>
<reference key="1">
    <citation type="journal article" date="1998" name="Nucleic Acids Res.">
        <title>Overexpression of Rad51 protein stimulates homologous recombination and increases resistance of mammalian cells to ionizing radiation.</title>
        <authorList>
            <person name="Vispe S."/>
            <person name="Cazaux C."/>
            <person name="Lesca C."/>
            <person name="Defais M."/>
        </authorList>
    </citation>
    <scope>NUCLEOTIDE SEQUENCE [MRNA]</scope>
    <source>
        <tissue>Ovary</tissue>
    </source>
</reference>
<gene>
    <name type="primary">RAD51</name>
    <name type="synonym">RAD51A</name>
</gene>
<sequence length="339" mass="36941">MAMQMQLEANADTSVEEESFGPQPISRLEQCGISANDVKKLEEAGFHTVEAVAYAPKKELINIKGISEAKADKILAEAAKLVPMGFTTATEFHQRRSEIIQITTGSKELDKLLQGGIETGSITEMFGEFRTGKTQICHTLAVTCQLPIDRGGGEGKAMYIDTEGTFRPERLLAVAERYGLSGSDVLDNVAYARGFNTDHQTQLLYQASAMMVESRYALLIVDSATALYRTDYSGRGELSARQMHLARFLRMLLRLADEFGVAVVITNQVVAQVDGAAMFTADPKKPIGGNIIAHASTTRLYLRKGRGETRICKVYDSPCLPEAEAMFAINADGVGDAKD</sequence>
<proteinExistence type="evidence at transcript level"/>
<evidence type="ECO:0000250" key="1">
    <source>
        <dbReference type="UniProtKB" id="Q06609"/>
    </source>
</evidence>
<evidence type="ECO:0000250" key="2">
    <source>
        <dbReference type="UniProtKB" id="Q08297"/>
    </source>
</evidence>
<evidence type="ECO:0000255" key="3"/>
<evidence type="ECO:0000305" key="4"/>
<comment type="function">
    <text evidence="1">Plays an important role in homologous strand exchange, a key step in DNA repair through homologous recombination (HR). Binds to single-stranded DNA in an ATP-dependent manner to form nucleoprotein filaments which are essential for the homology search and strand exchange. Catalyzes the recognition of homology and strand exchange between homologous DNA partners to form a joint molecule between a processed DNA break and the repair template. Recruited to resolve stalled replication forks during replication stress. Part of a PALB2-scaffolded HR complex containing BRCA2 and RAD51C and which is thought to play a role in DNA repair by HR. Plays a role in regulating mitochondrial DNA copy number under conditions of oxidative stress in the presence of RAD51C and XRCC3. Also involved in interstrand cross-link repair.</text>
</comment>
<comment type="subunit">
    <text evidence="1 2">Forms linear homooligomers, giving rise to a RAD51 nucleoprotein filament, which is essential for strand-pairing reactions during DNA recombination. Interacts with BRCA1 and either directly or indirectly with p53. Interacts with XRCC3, RAD54L and RAD54B. Interacts with the BCDX2 subcomplex RAD51C:RAD51B. Component of the homologous recombination repair (HR) complex composed of ERCC5/XPG, BRCA2, PALB2, DSS1 and RAD51. Interacts directly with PALB2 which may serve as a scaffold for a HR complex containing PALB2, BRCA2, RAD51C, RAD51 and XRCC3. Interacts with RAD51AP1 and RAD51AP2. Interacts with CHEK1, and this may require prior phosphorylation of CHEK1. Interacts with the MND1-PSMC3IP heterodimer. Found in a complex, at least composed of BLM, RAD51 and SPIDR; the complex formation is mediated by SPIDR. Interacts with SPIDR; the interaction is direct and recruits RAD51 to DNA damage sites. Interacts with FIGNL1 (via N-terminal one-half region); the interaction is direct. Interacts with RAD51AP1 (via C-terminal region); the interaction is direct. Interacts with NABP2, RPA1, PALB2 and RAD51. Interacts with SWI5/C9orf119, and at lower level with SFR1/MEIR5. Interacts with hyperphosphorylated RPA2; this interaction is necessary for efficient recruitment to chromatin in response to DNA damage. Interacts with SWSAP1; involved in homologous recombination repair. Interacts with PARPBP, BRCA2 and RECQL5; these interactions interfere with the formation of the RAD51-DNA homologous recombination structure. Interacts with POLQ; POLQ acts as an inhibitor of homology-recombination repair (HR) pathway by limiting RAD51 accumulation at resected ends. Interacts with FBH1. Interacts with POLN. Interacts with RFWD3. Interacts with the MCM8-MCM9 complex; the interaction recruits RAD51 to DNA damage sites (By similarity). Component of a multiprotein complex with MEIOB and SPATA22. Interacts with the complex BRME1:HSF2BP:BRCA2 (By similarity). Interacts with HELQ; stimulating HELQ DNA helicase activity and ability to unwing DNA. Interacts with MMS22L; the interaction is direct and promotes recruitment of RAD51 to sites of DNA damage. Interacts with the ATAD5 RFC-like complex. Within the ATAD5 RFC-like complex, interacts with ATAD5 (via N-terminus); the interaction is direct and enhanced under replication stress. Interacts with WDR48; the interaction is enhanced under replication stress (By similarity). Interacts with DNA helicase ZGRF1; the interaction promotes RAD51 strand exchange activity (By similarity). Interacts (when phosphorylated) with TOPBP1; interaction takes place following phosphorylation by CK2 and PLK1 and promotes recruitment to DNA damage sites (By similarity). Interacts with GRB2; this interaction inhibits RAD51 ATPase activity to stabilize RAD51 on stalled replication forks (By similarity).</text>
</comment>
<comment type="subcellular location">
    <subcellularLocation>
        <location evidence="1">Nucleus</location>
    </subcellularLocation>
    <subcellularLocation>
        <location evidence="1">Cytoplasm</location>
    </subcellularLocation>
    <subcellularLocation>
        <location evidence="1">Cytoplasm</location>
        <location evidence="1">Perinuclear region</location>
    </subcellularLocation>
    <subcellularLocation>
        <location evidence="1">Mitochondrion matrix</location>
    </subcellularLocation>
    <subcellularLocation>
        <location evidence="1">Chromosome</location>
    </subcellularLocation>
    <subcellularLocation>
        <location evidence="1">Cytoplasm</location>
        <location evidence="1">Cytoskeleton</location>
        <location evidence="1">Microtubule organizing center</location>
        <location evidence="1">Centrosome</location>
    </subcellularLocation>
    <text evidence="1">Colocalizes with RAD51AP1 and RPA2 to multiple nuclear foci upon induction of DNA damage. DNA damage induces an increase in nuclear levels. Together with FIGNL1, redistributed in discrete nuclear DNA damage-induced foci after ionizing radiation (IR) or camptothecin (CPT) treatment. Accumulated at sites of DNA damage in a SPIDR-dependent manner. Recruited at sites of DNA damage in a MCM9-MCM8-dependent manner. Recruited at sites of DNA damage following interaction with TOPBP1 in S-phase. Colocalizes with ERCC5/XPG to nuclear foci in S phase. Recruited to stalled replication forks during replication stress by the TONSL-MMS22L complex, as well as ATAD5 and WDR48 in an ATR-dependent manner.</text>
</comment>
<comment type="PTM">
    <text evidence="1">Ubiquitinated by the SCF(FBH1) E3 ubiquitin ligase complex, regulating RAD51 subcellular location and preventing its association with DNA. Ubiquitinated by RFWD3 in response to DNA damage: ubiquitination leads to degradation by the proteasome, promoting homologous recombination.</text>
</comment>
<comment type="PTM">
    <text evidence="1">Phosphorylation of Thr-309 by CHEK1 may enhance association with chromatin at sites of DNA damage and promote DNA repair by homologous recombination. Phosphorylated at Ser-14 by PLK1, triggering phosphorylation at Thr-13 by CK2, thereby promoting interaction with TOPBP1 and recruitment to DNA damage sites during S-phase. Phosphorylation by ABL1 inhibits function.</text>
</comment>
<comment type="similarity">
    <text evidence="4">Belongs to the RecA family. RAD51 subfamily.</text>
</comment>
<keyword id="KW-0007">Acetylation</keyword>
<keyword id="KW-0067">ATP-binding</keyword>
<keyword id="KW-0158">Chromosome</keyword>
<keyword id="KW-0963">Cytoplasm</keyword>
<keyword id="KW-0206">Cytoskeleton</keyword>
<keyword id="KW-0227">DNA damage</keyword>
<keyword id="KW-0233">DNA recombination</keyword>
<keyword id="KW-0234">DNA repair</keyword>
<keyword id="KW-0238">DNA-binding</keyword>
<keyword id="KW-1017">Isopeptide bond</keyword>
<keyword id="KW-0496">Mitochondrion</keyword>
<keyword id="KW-0547">Nucleotide-binding</keyword>
<keyword id="KW-0539">Nucleus</keyword>
<keyword id="KW-0597">Phosphoprotein</keyword>
<keyword id="KW-0832">Ubl conjugation</keyword>
<name>RAD51_CRIGR</name>
<dbReference type="EMBL" id="Y08202">
    <property type="protein sequence ID" value="CAA69384.1"/>
    <property type="molecule type" value="mRNA"/>
</dbReference>
<dbReference type="RefSeq" id="NP_001233686.1">
    <property type="nucleotide sequence ID" value="NM_001246757.1"/>
</dbReference>
<dbReference type="RefSeq" id="XP_007647132.1">
    <property type="nucleotide sequence ID" value="XM_007648942.2"/>
</dbReference>
<dbReference type="BMRB" id="P70099"/>
<dbReference type="SMR" id="P70099"/>
<dbReference type="PaxDb" id="10029-NP_001233686.1"/>
<dbReference type="Ensembl" id="ENSCGRT00001013767.1">
    <property type="protein sequence ID" value="ENSCGRP00001009550.1"/>
    <property type="gene ID" value="ENSCGRG00001011644.1"/>
</dbReference>
<dbReference type="GeneID" id="100689324"/>
<dbReference type="KEGG" id="cge:100689324"/>
<dbReference type="CTD" id="5888"/>
<dbReference type="eggNOG" id="KOG1433">
    <property type="taxonomic scope" value="Eukaryota"/>
</dbReference>
<dbReference type="GeneTree" id="ENSGT00940000156157"/>
<dbReference type="OMA" id="RAYNSNH"/>
<dbReference type="OrthoDB" id="10251254at2759"/>
<dbReference type="Proteomes" id="UP000694386">
    <property type="component" value="Unplaced"/>
</dbReference>
<dbReference type="Proteomes" id="UP001108280">
    <property type="component" value="Chromosome 6"/>
</dbReference>
<dbReference type="GO" id="GO:0005813">
    <property type="term" value="C:centrosome"/>
    <property type="evidence" value="ECO:0007669"/>
    <property type="project" value="UniProtKB-SubCell"/>
</dbReference>
<dbReference type="GO" id="GO:0005694">
    <property type="term" value="C:chromosome"/>
    <property type="evidence" value="ECO:0000250"/>
    <property type="project" value="UniProtKB"/>
</dbReference>
<dbReference type="GO" id="GO:0000793">
    <property type="term" value="C:condensed chromosome"/>
    <property type="evidence" value="ECO:0000250"/>
    <property type="project" value="UniProtKB"/>
</dbReference>
<dbReference type="GO" id="GO:0000794">
    <property type="term" value="C:condensed nuclear chromosome"/>
    <property type="evidence" value="ECO:0000250"/>
    <property type="project" value="UniProtKB"/>
</dbReference>
<dbReference type="GO" id="GO:0005737">
    <property type="term" value="C:cytoplasm"/>
    <property type="evidence" value="ECO:0000250"/>
    <property type="project" value="UniProtKB"/>
</dbReference>
<dbReference type="GO" id="GO:0005759">
    <property type="term" value="C:mitochondrial matrix"/>
    <property type="evidence" value="ECO:0007669"/>
    <property type="project" value="UniProtKB-SubCell"/>
</dbReference>
<dbReference type="GO" id="GO:0000228">
    <property type="term" value="C:nuclear chromosome"/>
    <property type="evidence" value="ECO:0000250"/>
    <property type="project" value="UniProtKB"/>
</dbReference>
<dbReference type="GO" id="GO:0005634">
    <property type="term" value="C:nucleus"/>
    <property type="evidence" value="ECO:0000250"/>
    <property type="project" value="UniProtKB"/>
</dbReference>
<dbReference type="GO" id="GO:0048471">
    <property type="term" value="C:perinuclear region of cytoplasm"/>
    <property type="evidence" value="ECO:0000250"/>
    <property type="project" value="UniProtKB"/>
</dbReference>
<dbReference type="GO" id="GO:0035861">
    <property type="term" value="C:site of double-strand break"/>
    <property type="evidence" value="ECO:0000250"/>
    <property type="project" value="UniProtKB"/>
</dbReference>
<dbReference type="GO" id="GO:0005524">
    <property type="term" value="F:ATP binding"/>
    <property type="evidence" value="ECO:0007669"/>
    <property type="project" value="UniProtKB-KW"/>
</dbReference>
<dbReference type="GO" id="GO:0016887">
    <property type="term" value="F:ATP hydrolysis activity"/>
    <property type="evidence" value="ECO:0007669"/>
    <property type="project" value="InterPro"/>
</dbReference>
<dbReference type="GO" id="GO:0140664">
    <property type="term" value="F:ATP-dependent DNA damage sensor activity"/>
    <property type="evidence" value="ECO:0007669"/>
    <property type="project" value="InterPro"/>
</dbReference>
<dbReference type="GO" id="GO:0000150">
    <property type="term" value="F:DNA strand exchange activity"/>
    <property type="evidence" value="ECO:0007669"/>
    <property type="project" value="InterPro"/>
</dbReference>
<dbReference type="GO" id="GO:0003690">
    <property type="term" value="F:double-stranded DNA binding"/>
    <property type="evidence" value="ECO:0000250"/>
    <property type="project" value="UniProtKB"/>
</dbReference>
<dbReference type="GO" id="GO:0003697">
    <property type="term" value="F:single-stranded DNA binding"/>
    <property type="evidence" value="ECO:0000250"/>
    <property type="project" value="UniProtKB"/>
</dbReference>
<dbReference type="GO" id="GO:0017116">
    <property type="term" value="F:single-stranded DNA helicase activity"/>
    <property type="evidence" value="ECO:0000250"/>
    <property type="project" value="UniProtKB"/>
</dbReference>
<dbReference type="GO" id="GO:0072757">
    <property type="term" value="P:cellular response to camptothecin"/>
    <property type="evidence" value="ECO:0000250"/>
    <property type="project" value="UniProtKB"/>
</dbReference>
<dbReference type="GO" id="GO:0071479">
    <property type="term" value="P:cellular response to ionizing radiation"/>
    <property type="evidence" value="ECO:0000250"/>
    <property type="project" value="UniProtKB"/>
</dbReference>
<dbReference type="GO" id="GO:0070192">
    <property type="term" value="P:chromosome organization involved in meiotic cell cycle"/>
    <property type="evidence" value="ECO:0007669"/>
    <property type="project" value="TreeGrafter"/>
</dbReference>
<dbReference type="GO" id="GO:0006974">
    <property type="term" value="P:DNA damage response"/>
    <property type="evidence" value="ECO:0000250"/>
    <property type="project" value="UniProtKB"/>
</dbReference>
<dbReference type="GO" id="GO:0000730">
    <property type="term" value="P:DNA recombinase assembly"/>
    <property type="evidence" value="ECO:0000250"/>
    <property type="project" value="UniProtKB"/>
</dbReference>
<dbReference type="GO" id="GO:0042148">
    <property type="term" value="P:DNA strand invasion"/>
    <property type="evidence" value="ECO:0007669"/>
    <property type="project" value="TreeGrafter"/>
</dbReference>
<dbReference type="GO" id="GO:0000724">
    <property type="term" value="P:double-strand break repair via homologous recombination"/>
    <property type="evidence" value="ECO:0000314"/>
    <property type="project" value="CACAO"/>
</dbReference>
<dbReference type="GO" id="GO:0036297">
    <property type="term" value="P:interstrand cross-link repair"/>
    <property type="evidence" value="ECO:0000250"/>
    <property type="project" value="UniProtKB"/>
</dbReference>
<dbReference type="GO" id="GO:0051321">
    <property type="term" value="P:meiotic cell cycle"/>
    <property type="evidence" value="ECO:0000250"/>
    <property type="project" value="UniProtKB"/>
</dbReference>
<dbReference type="GO" id="GO:0006312">
    <property type="term" value="P:mitotic recombination"/>
    <property type="evidence" value="ECO:0007669"/>
    <property type="project" value="TreeGrafter"/>
</dbReference>
<dbReference type="GO" id="GO:1990426">
    <property type="term" value="P:mitotic recombination-dependent replication fork processing"/>
    <property type="evidence" value="ECO:0007669"/>
    <property type="project" value="InterPro"/>
</dbReference>
<dbReference type="GO" id="GO:0007131">
    <property type="term" value="P:reciprocal meiotic recombination"/>
    <property type="evidence" value="ECO:0007669"/>
    <property type="project" value="TreeGrafter"/>
</dbReference>
<dbReference type="GO" id="GO:0010569">
    <property type="term" value="P:regulation of double-strand break repair via homologous recombination"/>
    <property type="evidence" value="ECO:0000250"/>
    <property type="project" value="UniProtKB"/>
</dbReference>
<dbReference type="CDD" id="cd19513">
    <property type="entry name" value="Rad51"/>
    <property type="match status" value="1"/>
</dbReference>
<dbReference type="FunFam" id="1.10.150.20:FF:000029">
    <property type="entry name" value="DNA repair protein RAD51 homolog"/>
    <property type="match status" value="1"/>
</dbReference>
<dbReference type="FunFam" id="3.40.50.300:FF:000092">
    <property type="entry name" value="DNA repair protein Rad51 homolog"/>
    <property type="match status" value="1"/>
</dbReference>
<dbReference type="Gene3D" id="1.10.150.20">
    <property type="entry name" value="5' to 3' exonuclease, C-terminal subdomain"/>
    <property type="match status" value="1"/>
</dbReference>
<dbReference type="Gene3D" id="3.40.50.300">
    <property type="entry name" value="P-loop containing nucleotide triphosphate hydrolases"/>
    <property type="match status" value="1"/>
</dbReference>
<dbReference type="InterPro" id="IPR003593">
    <property type="entry name" value="AAA+_ATPase"/>
</dbReference>
<dbReference type="InterPro" id="IPR011941">
    <property type="entry name" value="DNA_recomb/repair_Rad51"/>
</dbReference>
<dbReference type="InterPro" id="IPR013632">
    <property type="entry name" value="DNA_recomb/repair_Rad51_C"/>
</dbReference>
<dbReference type="InterPro" id="IPR016467">
    <property type="entry name" value="DNA_recomb/repair_RecA-like"/>
</dbReference>
<dbReference type="InterPro" id="IPR010995">
    <property type="entry name" value="DNA_repair_Rad51/TF_NusA_a-hlx"/>
</dbReference>
<dbReference type="InterPro" id="IPR027417">
    <property type="entry name" value="P-loop_NTPase"/>
</dbReference>
<dbReference type="InterPro" id="IPR020588">
    <property type="entry name" value="RecA_ATP-bd"/>
</dbReference>
<dbReference type="InterPro" id="IPR020587">
    <property type="entry name" value="RecA_monomer-monomer_interface"/>
</dbReference>
<dbReference type="NCBIfam" id="NF003301">
    <property type="entry name" value="PRK04301.1"/>
    <property type="match status" value="1"/>
</dbReference>
<dbReference type="NCBIfam" id="TIGR02239">
    <property type="entry name" value="recomb_RAD51"/>
    <property type="match status" value="1"/>
</dbReference>
<dbReference type="PANTHER" id="PTHR22942:SF39">
    <property type="entry name" value="DNA REPAIR PROTEIN RAD51 HOMOLOG 1"/>
    <property type="match status" value="1"/>
</dbReference>
<dbReference type="PANTHER" id="PTHR22942">
    <property type="entry name" value="RECA/RAD51/RADA DNA STRAND-PAIRING FAMILY MEMBER"/>
    <property type="match status" value="1"/>
</dbReference>
<dbReference type="Pfam" id="PF14520">
    <property type="entry name" value="HHH_5"/>
    <property type="match status" value="1"/>
</dbReference>
<dbReference type="Pfam" id="PF08423">
    <property type="entry name" value="Rad51"/>
    <property type="match status" value="1"/>
</dbReference>
<dbReference type="PIRSF" id="PIRSF005856">
    <property type="entry name" value="Rad51"/>
    <property type="match status" value="1"/>
</dbReference>
<dbReference type="SMART" id="SM00382">
    <property type="entry name" value="AAA"/>
    <property type="match status" value="1"/>
</dbReference>
<dbReference type="SUPFAM" id="SSF52540">
    <property type="entry name" value="P-loop containing nucleoside triphosphate hydrolases"/>
    <property type="match status" value="1"/>
</dbReference>
<dbReference type="SUPFAM" id="SSF47794">
    <property type="entry name" value="Rad51 N-terminal domain-like"/>
    <property type="match status" value="1"/>
</dbReference>
<dbReference type="PROSITE" id="PS50162">
    <property type="entry name" value="RECA_2"/>
    <property type="match status" value="1"/>
</dbReference>
<dbReference type="PROSITE" id="PS50163">
    <property type="entry name" value="RECA_3"/>
    <property type="match status" value="1"/>
</dbReference>